<keyword id="KW-0687">Ribonucleoprotein</keyword>
<keyword id="KW-0689">Ribosomal protein</keyword>
<keyword id="KW-0694">RNA-binding</keyword>
<keyword id="KW-0699">rRNA-binding</keyword>
<dbReference type="EMBL" id="CP001164">
    <property type="protein sequence ID" value="ACI35942.1"/>
    <property type="molecule type" value="Genomic_DNA"/>
</dbReference>
<dbReference type="RefSeq" id="WP_000130100.1">
    <property type="nucleotide sequence ID" value="NC_011353.1"/>
</dbReference>
<dbReference type="SMR" id="B5YTN2"/>
<dbReference type="GeneID" id="93778676"/>
<dbReference type="KEGG" id="ecf:ECH74115_4634"/>
<dbReference type="HOGENOM" id="CLU_073626_1_1_6"/>
<dbReference type="GO" id="GO:0022627">
    <property type="term" value="C:cytosolic small ribosomal subunit"/>
    <property type="evidence" value="ECO:0007669"/>
    <property type="project" value="TreeGrafter"/>
</dbReference>
<dbReference type="GO" id="GO:0019843">
    <property type="term" value="F:rRNA binding"/>
    <property type="evidence" value="ECO:0007669"/>
    <property type="project" value="UniProtKB-UniRule"/>
</dbReference>
<dbReference type="GO" id="GO:0003735">
    <property type="term" value="F:structural constituent of ribosome"/>
    <property type="evidence" value="ECO:0007669"/>
    <property type="project" value="InterPro"/>
</dbReference>
<dbReference type="GO" id="GO:0006412">
    <property type="term" value="P:translation"/>
    <property type="evidence" value="ECO:0007669"/>
    <property type="project" value="UniProtKB-UniRule"/>
</dbReference>
<dbReference type="CDD" id="cd00364">
    <property type="entry name" value="Ribosomal_uS17"/>
    <property type="match status" value="1"/>
</dbReference>
<dbReference type="FunFam" id="2.40.50.140:FF:000014">
    <property type="entry name" value="30S ribosomal protein S17"/>
    <property type="match status" value="1"/>
</dbReference>
<dbReference type="Gene3D" id="2.40.50.140">
    <property type="entry name" value="Nucleic acid-binding proteins"/>
    <property type="match status" value="1"/>
</dbReference>
<dbReference type="HAMAP" id="MF_01345_B">
    <property type="entry name" value="Ribosomal_uS17_B"/>
    <property type="match status" value="1"/>
</dbReference>
<dbReference type="InterPro" id="IPR012340">
    <property type="entry name" value="NA-bd_OB-fold"/>
</dbReference>
<dbReference type="InterPro" id="IPR000266">
    <property type="entry name" value="Ribosomal_uS17"/>
</dbReference>
<dbReference type="InterPro" id="IPR019984">
    <property type="entry name" value="Ribosomal_uS17_bact/chlr"/>
</dbReference>
<dbReference type="InterPro" id="IPR019979">
    <property type="entry name" value="Ribosomal_uS17_CS"/>
</dbReference>
<dbReference type="NCBIfam" id="NF004123">
    <property type="entry name" value="PRK05610.1"/>
    <property type="match status" value="1"/>
</dbReference>
<dbReference type="NCBIfam" id="TIGR03635">
    <property type="entry name" value="uS17_bact"/>
    <property type="match status" value="1"/>
</dbReference>
<dbReference type="PANTHER" id="PTHR10744">
    <property type="entry name" value="40S RIBOSOMAL PROTEIN S11 FAMILY MEMBER"/>
    <property type="match status" value="1"/>
</dbReference>
<dbReference type="PANTHER" id="PTHR10744:SF1">
    <property type="entry name" value="SMALL RIBOSOMAL SUBUNIT PROTEIN US17M"/>
    <property type="match status" value="1"/>
</dbReference>
<dbReference type="Pfam" id="PF00366">
    <property type="entry name" value="Ribosomal_S17"/>
    <property type="match status" value="1"/>
</dbReference>
<dbReference type="PRINTS" id="PR00973">
    <property type="entry name" value="RIBOSOMALS17"/>
</dbReference>
<dbReference type="SUPFAM" id="SSF50249">
    <property type="entry name" value="Nucleic acid-binding proteins"/>
    <property type="match status" value="1"/>
</dbReference>
<dbReference type="PROSITE" id="PS00056">
    <property type="entry name" value="RIBOSOMAL_S17"/>
    <property type="match status" value="1"/>
</dbReference>
<name>RS17_ECO5E</name>
<comment type="function">
    <text evidence="1">One of the primary rRNA binding proteins, it binds specifically to the 5'-end of 16S ribosomal RNA.</text>
</comment>
<comment type="subunit">
    <text evidence="1">Part of the 30S ribosomal subunit.</text>
</comment>
<comment type="similarity">
    <text evidence="1">Belongs to the universal ribosomal protein uS17 family.</text>
</comment>
<sequence length="84" mass="9704">MTDKIRTLQGRVVSDKMEKSIVVAIERFVKHPIYGKFIKRTTKLHVHDENNECGIGDVVEIRECRPLSKTKSWTLVRVVEKAVL</sequence>
<gene>
    <name evidence="1" type="primary">rpsQ</name>
    <name type="ordered locus">ECH74115_4634</name>
</gene>
<accession>B5YTN2</accession>
<evidence type="ECO:0000255" key="1">
    <source>
        <dbReference type="HAMAP-Rule" id="MF_01345"/>
    </source>
</evidence>
<evidence type="ECO:0000305" key="2"/>
<organism>
    <name type="scientific">Escherichia coli O157:H7 (strain EC4115 / EHEC)</name>
    <dbReference type="NCBI Taxonomy" id="444450"/>
    <lineage>
        <taxon>Bacteria</taxon>
        <taxon>Pseudomonadati</taxon>
        <taxon>Pseudomonadota</taxon>
        <taxon>Gammaproteobacteria</taxon>
        <taxon>Enterobacterales</taxon>
        <taxon>Enterobacteriaceae</taxon>
        <taxon>Escherichia</taxon>
    </lineage>
</organism>
<reference key="1">
    <citation type="journal article" date="2011" name="Proc. Natl. Acad. Sci. U.S.A.">
        <title>Genomic anatomy of Escherichia coli O157:H7 outbreaks.</title>
        <authorList>
            <person name="Eppinger M."/>
            <person name="Mammel M.K."/>
            <person name="Leclerc J.E."/>
            <person name="Ravel J."/>
            <person name="Cebula T.A."/>
        </authorList>
    </citation>
    <scope>NUCLEOTIDE SEQUENCE [LARGE SCALE GENOMIC DNA]</scope>
    <source>
        <strain>EC4115 / EHEC</strain>
    </source>
</reference>
<protein>
    <recommendedName>
        <fullName evidence="1">Small ribosomal subunit protein uS17</fullName>
    </recommendedName>
    <alternativeName>
        <fullName evidence="2">30S ribosomal protein S17</fullName>
    </alternativeName>
</protein>
<proteinExistence type="inferred from homology"/>
<feature type="chain" id="PRO_1000143250" description="Small ribosomal subunit protein uS17">
    <location>
        <begin position="1"/>
        <end position="84"/>
    </location>
</feature>